<dbReference type="EMBL" id="AK004670">
    <property type="protein sequence ID" value="BAB23459.1"/>
    <property type="status" value="ALT_FRAME"/>
    <property type="molecule type" value="mRNA"/>
</dbReference>
<dbReference type="EMBL" id="AK006283">
    <property type="protein sequence ID" value="BAB24502.1"/>
    <property type="molecule type" value="mRNA"/>
</dbReference>
<dbReference type="EMBL" id="BC034890">
    <property type="protein sequence ID" value="AAH34890.1"/>
    <property type="molecule type" value="mRNA"/>
</dbReference>
<dbReference type="EMBL" id="BC055834">
    <property type="protein sequence ID" value="AAH55834.1"/>
    <property type="molecule type" value="mRNA"/>
</dbReference>
<dbReference type="CCDS" id="CCDS24119.1">
    <molecule id="Q9DBZ1-2"/>
</dbReference>
<dbReference type="CCDS" id="CCDS36031.1">
    <molecule id="Q9DBZ1-1"/>
</dbReference>
<dbReference type="RefSeq" id="NP_081354.1">
    <molecule id="Q9DBZ1-2"/>
    <property type="nucleotide sequence ID" value="NM_027078.3"/>
</dbReference>
<dbReference type="SMR" id="Q9DBZ1"/>
<dbReference type="BioGRID" id="212198">
    <property type="interactions" value="8"/>
</dbReference>
<dbReference type="FunCoup" id="Q9DBZ1">
    <property type="interactions" value="814"/>
</dbReference>
<dbReference type="IntAct" id="Q9DBZ1">
    <property type="interactions" value="8"/>
</dbReference>
<dbReference type="STRING" id="10090.ENSMUSP00000020149"/>
<dbReference type="GlyCosmos" id="Q9DBZ1">
    <property type="glycosylation" value="1 site, No reported glycans"/>
</dbReference>
<dbReference type="GlyGen" id="Q9DBZ1">
    <property type="glycosylation" value="1 site"/>
</dbReference>
<dbReference type="iPTMnet" id="Q9DBZ1"/>
<dbReference type="PhosphoSitePlus" id="Q9DBZ1"/>
<dbReference type="PaxDb" id="10090-ENSMUSP00000020149"/>
<dbReference type="PeptideAtlas" id="Q9DBZ1"/>
<dbReference type="ProteomicsDB" id="267038">
    <molecule id="Q9DBZ1-1"/>
</dbReference>
<dbReference type="ProteomicsDB" id="267039">
    <molecule id="Q9DBZ1-2"/>
</dbReference>
<dbReference type="Pumba" id="Q9DBZ1"/>
<dbReference type="Antibodypedia" id="44824">
    <property type="antibodies" value="200 antibodies from 25 providers"/>
</dbReference>
<dbReference type="DNASU" id="67454"/>
<dbReference type="Ensembl" id="ENSMUST00000020150.10">
    <molecule id="Q9DBZ1-2"/>
    <property type="protein sequence ID" value="ENSMUSP00000020150.4"/>
    <property type="gene ID" value="ENSMUSG00000019975.13"/>
</dbReference>
<dbReference type="GeneID" id="67454"/>
<dbReference type="KEGG" id="mmu:67454"/>
<dbReference type="UCSC" id="uc007gtm.1">
    <molecule id="Q9DBZ1-2"/>
    <property type="organism name" value="mouse"/>
</dbReference>
<dbReference type="AGR" id="MGI:1914704"/>
<dbReference type="CTD" id="121457"/>
<dbReference type="MGI" id="MGI:1914704">
    <property type="gene designation" value="Ikbip"/>
</dbReference>
<dbReference type="VEuPathDB" id="HostDB:ENSMUSG00000019975"/>
<dbReference type="eggNOG" id="ENOG502RXC3">
    <property type="taxonomic scope" value="Eukaryota"/>
</dbReference>
<dbReference type="GeneTree" id="ENSGT00500000045001"/>
<dbReference type="HOGENOM" id="CLU_061486_0_0_1"/>
<dbReference type="InParanoid" id="Q9DBZ1"/>
<dbReference type="OrthoDB" id="9907187at2759"/>
<dbReference type="PhylomeDB" id="Q9DBZ1"/>
<dbReference type="BioGRID-ORCS" id="67454">
    <property type="hits" value="2 hits in 81 CRISPR screens"/>
</dbReference>
<dbReference type="ChiTaRS" id="Ikbip">
    <property type="organism name" value="mouse"/>
</dbReference>
<dbReference type="PRO" id="PR:Q9DBZ1"/>
<dbReference type="Proteomes" id="UP000000589">
    <property type="component" value="Chromosome 10"/>
</dbReference>
<dbReference type="RNAct" id="Q9DBZ1">
    <property type="molecule type" value="protein"/>
</dbReference>
<dbReference type="Bgee" id="ENSMUSG00000019975">
    <property type="expression patterns" value="Expressed in vault of skull and 261 other cell types or tissues"/>
</dbReference>
<dbReference type="ExpressionAtlas" id="Q9DBZ1">
    <property type="expression patterns" value="baseline and differential"/>
</dbReference>
<dbReference type="GO" id="GO:0005783">
    <property type="term" value="C:endoplasmic reticulum"/>
    <property type="evidence" value="ECO:0000250"/>
    <property type="project" value="HGNC-UCL"/>
</dbReference>
<dbReference type="GO" id="GO:0005789">
    <property type="term" value="C:endoplasmic reticulum membrane"/>
    <property type="evidence" value="ECO:0007669"/>
    <property type="project" value="UniProtKB-SubCell"/>
</dbReference>
<dbReference type="GO" id="GO:0070555">
    <property type="term" value="P:response to interleukin-1"/>
    <property type="evidence" value="ECO:0000315"/>
    <property type="project" value="MGI"/>
</dbReference>
<dbReference type="GO" id="GO:0032496">
    <property type="term" value="P:response to lipopolysaccharide"/>
    <property type="evidence" value="ECO:0000315"/>
    <property type="project" value="MGI"/>
</dbReference>
<dbReference type="GO" id="GO:0034612">
    <property type="term" value="P:response to tumor necrosis factor"/>
    <property type="evidence" value="ECO:0000315"/>
    <property type="project" value="MGI"/>
</dbReference>
<dbReference type="InterPro" id="IPR024152">
    <property type="entry name" value="Inh_kappa-B_kinase-int"/>
</dbReference>
<dbReference type="PANTHER" id="PTHR21734">
    <property type="entry name" value="INHIBITOR OF NUCLEAR FACTOR KAPPA-B KINASE-INTERACTING PROTEIN"/>
    <property type="match status" value="1"/>
</dbReference>
<dbReference type="PANTHER" id="PTHR21734:SF11">
    <property type="entry name" value="INHIBITOR OF NUCLEAR FACTOR KAPPA-B KINASE-INTERACTING PROTEIN"/>
    <property type="match status" value="1"/>
</dbReference>
<dbReference type="SUPFAM" id="SSF57997">
    <property type="entry name" value="Tropomyosin"/>
    <property type="match status" value="1"/>
</dbReference>
<accession>Q9DBZ1</accession>
<accession>Q7TMH1</accession>
<accession>Q8K1Z4</accession>
<accession>Q9DA09</accession>
<gene>
    <name type="primary">Ikbip</name>
    <name type="synonym">Ikip</name>
</gene>
<organism>
    <name type="scientific">Mus musculus</name>
    <name type="common">Mouse</name>
    <dbReference type="NCBI Taxonomy" id="10090"/>
    <lineage>
        <taxon>Eukaryota</taxon>
        <taxon>Metazoa</taxon>
        <taxon>Chordata</taxon>
        <taxon>Craniata</taxon>
        <taxon>Vertebrata</taxon>
        <taxon>Euteleostomi</taxon>
        <taxon>Mammalia</taxon>
        <taxon>Eutheria</taxon>
        <taxon>Euarchontoglires</taxon>
        <taxon>Glires</taxon>
        <taxon>Rodentia</taxon>
        <taxon>Myomorpha</taxon>
        <taxon>Muroidea</taxon>
        <taxon>Muridae</taxon>
        <taxon>Murinae</taxon>
        <taxon>Mus</taxon>
        <taxon>Mus</taxon>
    </lineage>
</organism>
<sequence length="373" mass="42532">MSEVKSRKKPGPKVAAPEPEKRSDGRKNPEARGDAGWADPRTGLSLLSLAMTLGLAWLVFQQSEKFAKVEKQYRLLQTESSEFQGLQSKISLISSKLESTENTLQEATSSISLMTQFEQEVSGLQRSIRDIETSEEMLTQKMQNLNEKFQNITDFWKRTLAEMIDDTAVFKSEVKDTHSEVTLKINSADQEIKSLTERLKDLEDSTLRNIRTVSRQEEEDLLRVEAQLSSDTKAVKKLEEEQHTLLARDEDLTNKLSSYEPKVEECKAHFPTIENAVHSVLRVSQDLIGTERKMEELTMQMFNMEDDMLRAVSEIMEMQKTLEGIQYDNSLLKMQNELVVLKGKVHDFIAYSSAREKGTLGEYSLGNKGTDEY</sequence>
<feature type="chain" id="PRO_0000342262" description="Inhibitor of nuclear factor kappa-B kinase-interacting protein">
    <location>
        <begin position="1"/>
        <end position="373"/>
    </location>
</feature>
<feature type="transmembrane region" description="Helical" evidence="2">
    <location>
        <begin position="43"/>
        <end position="59"/>
    </location>
</feature>
<feature type="region of interest" description="Disordered" evidence="3">
    <location>
        <begin position="1"/>
        <end position="38"/>
    </location>
</feature>
<feature type="coiled-coil region" evidence="2">
    <location>
        <begin position="86"/>
        <end position="257"/>
    </location>
</feature>
<feature type="coiled-coil region" evidence="2">
    <location>
        <begin position="285"/>
        <end position="324"/>
    </location>
</feature>
<feature type="compositionally biased region" description="Basic residues" evidence="3">
    <location>
        <begin position="1"/>
        <end position="11"/>
    </location>
</feature>
<feature type="compositionally biased region" description="Basic and acidic residues" evidence="3">
    <location>
        <begin position="18"/>
        <end position="33"/>
    </location>
</feature>
<feature type="glycosylation site" description="N-linked (GlcNAc...) asparagine" evidence="2">
    <location>
        <position position="151"/>
    </location>
</feature>
<feature type="splice variant" id="VSP_034411" description="In isoform 2." evidence="4 5">
    <original>LESTENTLQEATSSISLMTQFEQEVSGLQRSIRDIETSEEMLTQKMQNLNEKFQNITDFWKRTLAEMIDDTAVFKSEVKDTHSEVTLKINSADQEIKSLTERLKDLEDSTLRNIRTVSRQEEEDLLRVEAQLSSDTKAVKKLEEEQHTLLARDEDLTNKLSSYEPKVEECKAHFPTIENAVHSVLRVSQDLIGTERKMEELTMQMFNMEDDMLRAVSEIMEMQKTLEGIQYDNSLLKMQNELVVLKGKVHDFIAYSSAREKGTLGEYSLGNKGTDEY</original>
    <variation>YQECEALVEQLKAFQIAAHLKLLQEEIHEMKTWSNRITERQGTLNNTLTRLSEDIIKVDQGTASMAKDMGLKITSVKTDVRRISGLVTEVESLTDAVQALGNKVKKVETATVENIGDLLSSSIDRTSALRKTASENAKRIDSVAQRLAELQGDFDEHTDRFLSLESDRAKVLKAVSFANDLKPKVSNLKKDFSRLEPLVDDLTLRIGRLGSDLMQREKEIAFLKEKISNLTVVQAAIKDIKDEITHISD</variation>
    <location>
        <begin position="97"/>
        <end position="373"/>
    </location>
</feature>
<feature type="sequence conflict" description="In Ref. 1; BAB23459." evidence="6" ref="1">
    <original>P</original>
    <variation>H</variation>
    <location>
        <position position="17"/>
    </location>
</feature>
<feature type="sequence conflict" description="In Ref. 2; AAH55834." evidence="6" ref="2">
    <original>M</original>
    <variation>T</variation>
    <location>
        <position position="51"/>
    </location>
</feature>
<feature type="sequence conflict" description="In Ref. 2; AAH55834." evidence="6" ref="2">
    <original>I</original>
    <variation>M</variation>
    <location>
        <position position="111"/>
    </location>
</feature>
<feature type="sequence conflict" description="In Ref. 2; AAH55834." evidence="6" ref="2">
    <original>I</original>
    <variation>S</variation>
    <location>
        <position position="164"/>
    </location>
</feature>
<feature type="sequence conflict" description="In Ref. 2; AAH55834." evidence="6" ref="2">
    <original>V</original>
    <variation>I</variation>
    <location>
        <position position="169"/>
    </location>
</feature>
<feature type="sequence conflict" description="In Ref. 2; AAH55834." evidence="6" ref="2">
    <original>D</original>
    <variation>E</variation>
    <location>
        <position position="189"/>
    </location>
</feature>
<feature type="sequence conflict" description="In Ref. 2; AAH55834." evidence="6" ref="2">
    <original>F</original>
    <variation>L</variation>
    <location>
        <position position="270"/>
    </location>
</feature>
<feature type="sequence conflict" description="In Ref. 2; AAH55834." evidence="6" ref="2">
    <original>A</original>
    <variation>T</variation>
    <location>
        <position position="354"/>
    </location>
</feature>
<feature type="sequence conflict" description="In Ref. 2; AAH34890." evidence="6" ref="2">
    <original>G</original>
    <variation>E</variation>
    <location sequence="Q9DBZ1-2">
        <position position="197"/>
    </location>
</feature>
<proteinExistence type="evidence at protein level"/>
<comment type="function">
    <text evidence="1">Target of p53/TP53 with pro-apoptotic function.</text>
</comment>
<comment type="subcellular location">
    <subcellularLocation>
        <location evidence="1">Endoplasmic reticulum membrane</location>
        <topology evidence="1">Single-pass membrane protein</topology>
    </subcellularLocation>
</comment>
<comment type="alternative products">
    <event type="alternative splicing"/>
    <isoform>
        <id>Q9DBZ1-1</id>
        <name>1</name>
        <name>Ikip1</name>
        <sequence type="displayed"/>
    </isoform>
    <isoform>
        <id>Q9DBZ1-2</id>
        <name>2</name>
        <name>Ikip2</name>
        <sequence type="described" ref="VSP_034411"/>
    </isoform>
</comment>
<comment type="PTM">
    <text evidence="1">N-glycosylated at Asn-151.</text>
</comment>
<comment type="miscellaneous">
    <text>Shares a common promoter with APAF1 from which the 2 genes are transcribed in opposite directions.</text>
</comment>
<comment type="sequence caution" evidence="6">
    <conflict type="frameshift">
        <sequence resource="EMBL-CDS" id="BAB23459"/>
    </conflict>
</comment>
<evidence type="ECO:0000250" key="1"/>
<evidence type="ECO:0000255" key="2"/>
<evidence type="ECO:0000256" key="3">
    <source>
        <dbReference type="SAM" id="MobiDB-lite"/>
    </source>
</evidence>
<evidence type="ECO:0000303" key="4">
    <source>
    </source>
</evidence>
<evidence type="ECO:0000303" key="5">
    <source>
    </source>
</evidence>
<evidence type="ECO:0000305" key="6"/>
<reference key="1">
    <citation type="journal article" date="2005" name="Science">
        <title>The transcriptional landscape of the mammalian genome.</title>
        <authorList>
            <person name="Carninci P."/>
            <person name="Kasukawa T."/>
            <person name="Katayama S."/>
            <person name="Gough J."/>
            <person name="Frith M.C."/>
            <person name="Maeda N."/>
            <person name="Oyama R."/>
            <person name="Ravasi T."/>
            <person name="Lenhard B."/>
            <person name="Wells C."/>
            <person name="Kodzius R."/>
            <person name="Shimokawa K."/>
            <person name="Bajic V.B."/>
            <person name="Brenner S.E."/>
            <person name="Batalov S."/>
            <person name="Forrest A.R."/>
            <person name="Zavolan M."/>
            <person name="Davis M.J."/>
            <person name="Wilming L.G."/>
            <person name="Aidinis V."/>
            <person name="Allen J.E."/>
            <person name="Ambesi-Impiombato A."/>
            <person name="Apweiler R."/>
            <person name="Aturaliya R.N."/>
            <person name="Bailey T.L."/>
            <person name="Bansal M."/>
            <person name="Baxter L."/>
            <person name="Beisel K.W."/>
            <person name="Bersano T."/>
            <person name="Bono H."/>
            <person name="Chalk A.M."/>
            <person name="Chiu K.P."/>
            <person name="Choudhary V."/>
            <person name="Christoffels A."/>
            <person name="Clutterbuck D.R."/>
            <person name="Crowe M.L."/>
            <person name="Dalla E."/>
            <person name="Dalrymple B.P."/>
            <person name="de Bono B."/>
            <person name="Della Gatta G."/>
            <person name="di Bernardo D."/>
            <person name="Down T."/>
            <person name="Engstrom P."/>
            <person name="Fagiolini M."/>
            <person name="Faulkner G."/>
            <person name="Fletcher C.F."/>
            <person name="Fukushima T."/>
            <person name="Furuno M."/>
            <person name="Futaki S."/>
            <person name="Gariboldi M."/>
            <person name="Georgii-Hemming P."/>
            <person name="Gingeras T.R."/>
            <person name="Gojobori T."/>
            <person name="Green R.E."/>
            <person name="Gustincich S."/>
            <person name="Harbers M."/>
            <person name="Hayashi Y."/>
            <person name="Hensch T.K."/>
            <person name="Hirokawa N."/>
            <person name="Hill D."/>
            <person name="Huminiecki L."/>
            <person name="Iacono M."/>
            <person name="Ikeo K."/>
            <person name="Iwama A."/>
            <person name="Ishikawa T."/>
            <person name="Jakt M."/>
            <person name="Kanapin A."/>
            <person name="Katoh M."/>
            <person name="Kawasawa Y."/>
            <person name="Kelso J."/>
            <person name="Kitamura H."/>
            <person name="Kitano H."/>
            <person name="Kollias G."/>
            <person name="Krishnan S.P."/>
            <person name="Kruger A."/>
            <person name="Kummerfeld S.K."/>
            <person name="Kurochkin I.V."/>
            <person name="Lareau L.F."/>
            <person name="Lazarevic D."/>
            <person name="Lipovich L."/>
            <person name="Liu J."/>
            <person name="Liuni S."/>
            <person name="McWilliam S."/>
            <person name="Madan Babu M."/>
            <person name="Madera M."/>
            <person name="Marchionni L."/>
            <person name="Matsuda H."/>
            <person name="Matsuzawa S."/>
            <person name="Miki H."/>
            <person name="Mignone F."/>
            <person name="Miyake S."/>
            <person name="Morris K."/>
            <person name="Mottagui-Tabar S."/>
            <person name="Mulder N."/>
            <person name="Nakano N."/>
            <person name="Nakauchi H."/>
            <person name="Ng P."/>
            <person name="Nilsson R."/>
            <person name="Nishiguchi S."/>
            <person name="Nishikawa S."/>
            <person name="Nori F."/>
            <person name="Ohara O."/>
            <person name="Okazaki Y."/>
            <person name="Orlando V."/>
            <person name="Pang K.C."/>
            <person name="Pavan W.J."/>
            <person name="Pavesi G."/>
            <person name="Pesole G."/>
            <person name="Petrovsky N."/>
            <person name="Piazza S."/>
            <person name="Reed J."/>
            <person name="Reid J.F."/>
            <person name="Ring B.Z."/>
            <person name="Ringwald M."/>
            <person name="Rost B."/>
            <person name="Ruan Y."/>
            <person name="Salzberg S.L."/>
            <person name="Sandelin A."/>
            <person name="Schneider C."/>
            <person name="Schoenbach C."/>
            <person name="Sekiguchi K."/>
            <person name="Semple C.A."/>
            <person name="Seno S."/>
            <person name="Sessa L."/>
            <person name="Sheng Y."/>
            <person name="Shibata Y."/>
            <person name="Shimada H."/>
            <person name="Shimada K."/>
            <person name="Silva D."/>
            <person name="Sinclair B."/>
            <person name="Sperling S."/>
            <person name="Stupka E."/>
            <person name="Sugiura K."/>
            <person name="Sultana R."/>
            <person name="Takenaka Y."/>
            <person name="Taki K."/>
            <person name="Tammoja K."/>
            <person name="Tan S.L."/>
            <person name="Tang S."/>
            <person name="Taylor M.S."/>
            <person name="Tegner J."/>
            <person name="Teichmann S.A."/>
            <person name="Ueda H.R."/>
            <person name="van Nimwegen E."/>
            <person name="Verardo R."/>
            <person name="Wei C.L."/>
            <person name="Yagi K."/>
            <person name="Yamanishi H."/>
            <person name="Zabarovsky E."/>
            <person name="Zhu S."/>
            <person name="Zimmer A."/>
            <person name="Hide W."/>
            <person name="Bult C."/>
            <person name="Grimmond S.M."/>
            <person name="Teasdale R.D."/>
            <person name="Liu E.T."/>
            <person name="Brusic V."/>
            <person name="Quackenbush J."/>
            <person name="Wahlestedt C."/>
            <person name="Mattick J.S."/>
            <person name="Hume D.A."/>
            <person name="Kai C."/>
            <person name="Sasaki D."/>
            <person name="Tomaru Y."/>
            <person name="Fukuda S."/>
            <person name="Kanamori-Katayama M."/>
            <person name="Suzuki M."/>
            <person name="Aoki J."/>
            <person name="Arakawa T."/>
            <person name="Iida J."/>
            <person name="Imamura K."/>
            <person name="Itoh M."/>
            <person name="Kato T."/>
            <person name="Kawaji H."/>
            <person name="Kawagashira N."/>
            <person name="Kawashima T."/>
            <person name="Kojima M."/>
            <person name="Kondo S."/>
            <person name="Konno H."/>
            <person name="Nakano K."/>
            <person name="Ninomiya N."/>
            <person name="Nishio T."/>
            <person name="Okada M."/>
            <person name="Plessy C."/>
            <person name="Shibata K."/>
            <person name="Shiraki T."/>
            <person name="Suzuki S."/>
            <person name="Tagami M."/>
            <person name="Waki K."/>
            <person name="Watahiki A."/>
            <person name="Okamura-Oho Y."/>
            <person name="Suzuki H."/>
            <person name="Kawai J."/>
            <person name="Hayashizaki Y."/>
        </authorList>
    </citation>
    <scope>NUCLEOTIDE SEQUENCE [LARGE SCALE MRNA] (ISOFORMS 1 AND 2)</scope>
    <source>
        <strain>C57BL/6J</strain>
        <tissue>Lung</tissue>
        <tissue>Testis</tissue>
    </source>
</reference>
<reference key="2">
    <citation type="journal article" date="2004" name="Genome Res.">
        <title>The status, quality, and expansion of the NIH full-length cDNA project: the Mammalian Gene Collection (MGC).</title>
        <authorList>
            <consortium name="The MGC Project Team"/>
        </authorList>
    </citation>
    <scope>NUCLEOTIDE SEQUENCE [LARGE SCALE MRNA] (ISOFORMS 1 AND 2)</scope>
    <source>
        <strain>Czech II</strain>
        <tissue>Mammary tumor</tissue>
    </source>
</reference>
<reference key="3">
    <citation type="journal article" date="2010" name="Cell">
        <title>A tissue-specific atlas of mouse protein phosphorylation and expression.</title>
        <authorList>
            <person name="Huttlin E.L."/>
            <person name="Jedrychowski M.P."/>
            <person name="Elias J.E."/>
            <person name="Goswami T."/>
            <person name="Rad R."/>
            <person name="Beausoleil S.A."/>
            <person name="Villen J."/>
            <person name="Haas W."/>
            <person name="Sowa M.E."/>
            <person name="Gygi S.P."/>
        </authorList>
    </citation>
    <scope>IDENTIFICATION BY MASS SPECTROMETRY [LARGE SCALE ANALYSIS]</scope>
    <source>
        <tissue>Kidney</tissue>
        <tissue>Lung</tissue>
        <tissue>Pancreas</tissue>
        <tissue>Testis</tissue>
    </source>
</reference>
<keyword id="KW-0025">Alternative splicing</keyword>
<keyword id="KW-0175">Coiled coil</keyword>
<keyword id="KW-0256">Endoplasmic reticulum</keyword>
<keyword id="KW-0325">Glycoprotein</keyword>
<keyword id="KW-0472">Membrane</keyword>
<keyword id="KW-1185">Reference proteome</keyword>
<keyword id="KW-0812">Transmembrane</keyword>
<keyword id="KW-1133">Transmembrane helix</keyword>
<name>IKIP_MOUSE</name>
<protein>
    <recommendedName>
        <fullName>Inhibitor of nuclear factor kappa-B kinase-interacting protein</fullName>
        <shortName>I kappa-B kinase-interacting protein</shortName>
        <shortName>IKBKB-interacting protein</shortName>
        <shortName>IKK-interacting protein</shortName>
    </recommendedName>
</protein>